<dbReference type="EC" id="3.6.1.66" evidence="1"/>
<dbReference type="EMBL" id="CP001279">
    <property type="protein sequence ID" value="ACM92782.1"/>
    <property type="molecule type" value="Genomic_DNA"/>
</dbReference>
<dbReference type="RefSeq" id="WP_015901834.1">
    <property type="nucleotide sequence ID" value="NC_012115.1"/>
</dbReference>
<dbReference type="SMR" id="B9L638"/>
<dbReference type="STRING" id="598659.NAMH_1434"/>
<dbReference type="KEGG" id="nam:NAMH_1434"/>
<dbReference type="eggNOG" id="COG0127">
    <property type="taxonomic scope" value="Bacteria"/>
</dbReference>
<dbReference type="HOGENOM" id="CLU_082080_0_2_7"/>
<dbReference type="OrthoDB" id="9807456at2"/>
<dbReference type="Proteomes" id="UP000000448">
    <property type="component" value="Chromosome"/>
</dbReference>
<dbReference type="GO" id="GO:0005829">
    <property type="term" value="C:cytosol"/>
    <property type="evidence" value="ECO:0007669"/>
    <property type="project" value="TreeGrafter"/>
</dbReference>
<dbReference type="GO" id="GO:0035870">
    <property type="term" value="F:dITP diphosphatase activity"/>
    <property type="evidence" value="ECO:0007669"/>
    <property type="project" value="RHEA"/>
</dbReference>
<dbReference type="GO" id="GO:0036220">
    <property type="term" value="F:ITP diphosphatase activity"/>
    <property type="evidence" value="ECO:0007669"/>
    <property type="project" value="UniProtKB-EC"/>
</dbReference>
<dbReference type="GO" id="GO:0046872">
    <property type="term" value="F:metal ion binding"/>
    <property type="evidence" value="ECO:0007669"/>
    <property type="project" value="UniProtKB-KW"/>
</dbReference>
<dbReference type="GO" id="GO:0000166">
    <property type="term" value="F:nucleotide binding"/>
    <property type="evidence" value="ECO:0007669"/>
    <property type="project" value="UniProtKB-KW"/>
</dbReference>
<dbReference type="GO" id="GO:0017111">
    <property type="term" value="F:ribonucleoside triphosphate phosphatase activity"/>
    <property type="evidence" value="ECO:0007669"/>
    <property type="project" value="InterPro"/>
</dbReference>
<dbReference type="GO" id="GO:0036222">
    <property type="term" value="F:XTP diphosphatase activity"/>
    <property type="evidence" value="ECO:0007669"/>
    <property type="project" value="RHEA"/>
</dbReference>
<dbReference type="GO" id="GO:0009117">
    <property type="term" value="P:nucleotide metabolic process"/>
    <property type="evidence" value="ECO:0007669"/>
    <property type="project" value="UniProtKB-KW"/>
</dbReference>
<dbReference type="GO" id="GO:0009146">
    <property type="term" value="P:purine nucleoside triphosphate catabolic process"/>
    <property type="evidence" value="ECO:0007669"/>
    <property type="project" value="UniProtKB-UniRule"/>
</dbReference>
<dbReference type="CDD" id="cd00515">
    <property type="entry name" value="HAM1"/>
    <property type="match status" value="1"/>
</dbReference>
<dbReference type="FunFam" id="3.90.950.10:FF:000001">
    <property type="entry name" value="dITP/XTP pyrophosphatase"/>
    <property type="match status" value="1"/>
</dbReference>
<dbReference type="Gene3D" id="3.90.950.10">
    <property type="match status" value="1"/>
</dbReference>
<dbReference type="HAMAP" id="MF_01405">
    <property type="entry name" value="Non_canon_purine_NTPase"/>
    <property type="match status" value="1"/>
</dbReference>
<dbReference type="InterPro" id="IPR020922">
    <property type="entry name" value="dITP/XTP_pyrophosphatase"/>
</dbReference>
<dbReference type="InterPro" id="IPR029001">
    <property type="entry name" value="ITPase-like_fam"/>
</dbReference>
<dbReference type="InterPro" id="IPR002637">
    <property type="entry name" value="RdgB/HAM1"/>
</dbReference>
<dbReference type="NCBIfam" id="TIGR00042">
    <property type="entry name" value="RdgB/HAM1 family non-canonical purine NTP pyrophosphatase"/>
    <property type="match status" value="1"/>
</dbReference>
<dbReference type="PANTHER" id="PTHR11067:SF9">
    <property type="entry name" value="INOSINE TRIPHOSPHATE PYROPHOSPHATASE"/>
    <property type="match status" value="1"/>
</dbReference>
<dbReference type="PANTHER" id="PTHR11067">
    <property type="entry name" value="INOSINE TRIPHOSPHATE PYROPHOSPHATASE/HAM1 PROTEIN"/>
    <property type="match status" value="1"/>
</dbReference>
<dbReference type="Pfam" id="PF01725">
    <property type="entry name" value="Ham1p_like"/>
    <property type="match status" value="1"/>
</dbReference>
<dbReference type="SUPFAM" id="SSF52972">
    <property type="entry name" value="ITPase-like"/>
    <property type="match status" value="1"/>
</dbReference>
<evidence type="ECO:0000255" key="1">
    <source>
        <dbReference type="HAMAP-Rule" id="MF_01405"/>
    </source>
</evidence>
<proteinExistence type="inferred from homology"/>
<comment type="function">
    <text evidence="1">Pyrophosphatase that catalyzes the hydrolysis of nucleoside triphosphates to their monophosphate derivatives, with a high preference for the non-canonical purine nucleotides XTP (xanthosine triphosphate), dITP (deoxyinosine triphosphate) and ITP. Seems to function as a house-cleaning enzyme that removes non-canonical purine nucleotides from the nucleotide pool, thus preventing their incorporation into DNA/RNA and avoiding chromosomal lesions.</text>
</comment>
<comment type="catalytic activity">
    <reaction evidence="1">
        <text>XTP + H2O = XMP + diphosphate + H(+)</text>
        <dbReference type="Rhea" id="RHEA:28610"/>
        <dbReference type="ChEBI" id="CHEBI:15377"/>
        <dbReference type="ChEBI" id="CHEBI:15378"/>
        <dbReference type="ChEBI" id="CHEBI:33019"/>
        <dbReference type="ChEBI" id="CHEBI:57464"/>
        <dbReference type="ChEBI" id="CHEBI:61314"/>
        <dbReference type="EC" id="3.6.1.66"/>
    </reaction>
</comment>
<comment type="catalytic activity">
    <reaction evidence="1">
        <text>dITP + H2O = dIMP + diphosphate + H(+)</text>
        <dbReference type="Rhea" id="RHEA:28342"/>
        <dbReference type="ChEBI" id="CHEBI:15377"/>
        <dbReference type="ChEBI" id="CHEBI:15378"/>
        <dbReference type="ChEBI" id="CHEBI:33019"/>
        <dbReference type="ChEBI" id="CHEBI:61194"/>
        <dbReference type="ChEBI" id="CHEBI:61382"/>
        <dbReference type="EC" id="3.6.1.66"/>
    </reaction>
</comment>
<comment type="catalytic activity">
    <reaction evidence="1">
        <text>ITP + H2O = IMP + diphosphate + H(+)</text>
        <dbReference type="Rhea" id="RHEA:29399"/>
        <dbReference type="ChEBI" id="CHEBI:15377"/>
        <dbReference type="ChEBI" id="CHEBI:15378"/>
        <dbReference type="ChEBI" id="CHEBI:33019"/>
        <dbReference type="ChEBI" id="CHEBI:58053"/>
        <dbReference type="ChEBI" id="CHEBI:61402"/>
        <dbReference type="EC" id="3.6.1.66"/>
    </reaction>
</comment>
<comment type="cofactor">
    <cofactor evidence="1">
        <name>Mg(2+)</name>
        <dbReference type="ChEBI" id="CHEBI:18420"/>
    </cofactor>
    <text evidence="1">Binds 1 Mg(2+) ion per subunit.</text>
</comment>
<comment type="subunit">
    <text evidence="1">Homodimer.</text>
</comment>
<comment type="similarity">
    <text evidence="1">Belongs to the HAM1 NTPase family.</text>
</comment>
<reference key="1">
    <citation type="journal article" date="2009" name="PLoS Genet.">
        <title>Adaptations to submarine hydrothermal environments exemplified by the genome of Nautilia profundicola.</title>
        <authorList>
            <person name="Campbell B.J."/>
            <person name="Smith J.L."/>
            <person name="Hanson T.E."/>
            <person name="Klotz M.G."/>
            <person name="Stein L.Y."/>
            <person name="Lee C.K."/>
            <person name="Wu D."/>
            <person name="Robinson J.M."/>
            <person name="Khouri H.M."/>
            <person name="Eisen J.A."/>
            <person name="Cary S.C."/>
        </authorList>
    </citation>
    <scope>NUCLEOTIDE SEQUENCE [LARGE SCALE GENOMIC DNA]</scope>
    <source>
        <strain>ATCC BAA-1463 / DSM 18972 / AmH</strain>
    </source>
</reference>
<organism>
    <name type="scientific">Nautilia profundicola (strain ATCC BAA-1463 / DSM 18972 / AmH)</name>
    <dbReference type="NCBI Taxonomy" id="598659"/>
    <lineage>
        <taxon>Bacteria</taxon>
        <taxon>Pseudomonadati</taxon>
        <taxon>Campylobacterota</taxon>
        <taxon>Epsilonproteobacteria</taxon>
        <taxon>Nautiliales</taxon>
        <taxon>Nautiliaceae</taxon>
        <taxon>Nautilia</taxon>
    </lineage>
</organism>
<feature type="chain" id="PRO_1000184580" description="dITP/XTP pyrophosphatase">
    <location>
        <begin position="1"/>
        <end position="195"/>
    </location>
</feature>
<feature type="active site" description="Proton acceptor" evidence="1">
    <location>
        <position position="68"/>
    </location>
</feature>
<feature type="binding site" evidence="1">
    <location>
        <begin position="7"/>
        <end position="12"/>
    </location>
    <ligand>
        <name>substrate</name>
    </ligand>
</feature>
<feature type="binding site" evidence="1">
    <location>
        <position position="38"/>
    </location>
    <ligand>
        <name>Mg(2+)</name>
        <dbReference type="ChEBI" id="CHEBI:18420"/>
    </ligand>
</feature>
<feature type="binding site" evidence="1">
    <location>
        <position position="68"/>
    </location>
    <ligand>
        <name>Mg(2+)</name>
        <dbReference type="ChEBI" id="CHEBI:18420"/>
    </ligand>
</feature>
<feature type="binding site" evidence="1">
    <location>
        <position position="69"/>
    </location>
    <ligand>
        <name>substrate</name>
    </ligand>
</feature>
<feature type="binding site" evidence="1">
    <location>
        <begin position="150"/>
        <end position="153"/>
    </location>
    <ligand>
        <name>substrate</name>
    </ligand>
</feature>
<feature type="binding site" evidence="1">
    <location>
        <position position="173"/>
    </location>
    <ligand>
        <name>substrate</name>
    </ligand>
</feature>
<feature type="binding site" evidence="1">
    <location>
        <begin position="178"/>
        <end position="179"/>
    </location>
    <ligand>
        <name>substrate</name>
    </ligand>
</feature>
<accession>B9L638</accession>
<sequence>MKIIVASSNKGKIKEIKKFFEGIEILPYSELIEPFEIEENGTTFKDNAIIKAKTIYEKLPGSIVLADDSGISVPVLGGVPGIYSARFAGAGASDKDNLYKLIDELKKRNIKKTYAYYTAAIALATPYGIFTTHGFMHGNVIDEARGNKGFGYDPMFIPKGFDKTLGELDENIKKSISHRSKALELANILLKSINN</sequence>
<gene>
    <name type="ordered locus">NAMH_1434</name>
</gene>
<keyword id="KW-0378">Hydrolase</keyword>
<keyword id="KW-0460">Magnesium</keyword>
<keyword id="KW-0479">Metal-binding</keyword>
<keyword id="KW-0546">Nucleotide metabolism</keyword>
<keyword id="KW-0547">Nucleotide-binding</keyword>
<name>IXTPA_NAUPA</name>
<protein>
    <recommendedName>
        <fullName evidence="1">dITP/XTP pyrophosphatase</fullName>
        <ecNumber evidence="1">3.6.1.66</ecNumber>
    </recommendedName>
    <alternativeName>
        <fullName evidence="1">Non-canonical purine NTP pyrophosphatase</fullName>
    </alternativeName>
    <alternativeName>
        <fullName evidence="1">Non-standard purine NTP pyrophosphatase</fullName>
    </alternativeName>
    <alternativeName>
        <fullName evidence="1">Nucleoside-triphosphate diphosphatase</fullName>
    </alternativeName>
    <alternativeName>
        <fullName evidence="1">Nucleoside-triphosphate pyrophosphatase</fullName>
        <shortName evidence="1">NTPase</shortName>
    </alternativeName>
</protein>